<proteinExistence type="inferred from homology"/>
<feature type="chain" id="PRO_0000091241" description="Elongation factor G">
    <location>
        <begin position="1"/>
        <end position="694"/>
    </location>
</feature>
<feature type="domain" description="tr-type G">
    <location>
        <begin position="8"/>
        <end position="285"/>
    </location>
</feature>
<feature type="binding site" evidence="1">
    <location>
        <begin position="17"/>
        <end position="24"/>
    </location>
    <ligand>
        <name>GTP</name>
        <dbReference type="ChEBI" id="CHEBI:37565"/>
    </ligand>
</feature>
<feature type="binding site" evidence="1">
    <location>
        <begin position="81"/>
        <end position="85"/>
    </location>
    <ligand>
        <name>GTP</name>
        <dbReference type="ChEBI" id="CHEBI:37565"/>
    </ligand>
</feature>
<feature type="binding site" evidence="1">
    <location>
        <begin position="135"/>
        <end position="138"/>
    </location>
    <ligand>
        <name>GTP</name>
        <dbReference type="ChEBI" id="CHEBI:37565"/>
    </ligand>
</feature>
<reference key="1">
    <citation type="journal article" date="1989" name="Mol. Gen. Genet.">
        <title>Genes for the ribosomal proteins S12 and S7 and elongation factors EF-G and EF-Tu of the cyanobacterium, Anacystis nidulans: structural homology between 16S rRNA and S7 mRNA.</title>
        <authorList>
            <person name="Meng B.-Y."/>
            <person name="Shinozaki K."/>
            <person name="Sugiura M."/>
        </authorList>
    </citation>
    <scope>NUCLEOTIDE SEQUENCE [GENOMIC DNA]</scope>
</reference>
<reference key="2">
    <citation type="journal article" date="2007" name="Photosyn. Res.">
        <title>Complete nucleotide sequence of the freshwater unicellular cyanobacterium Synechococcus elongatus PCC 6301 chromosome: gene content and organization.</title>
        <authorList>
            <person name="Sugita C."/>
            <person name="Ogata K."/>
            <person name="Shikata M."/>
            <person name="Jikuya H."/>
            <person name="Takano J."/>
            <person name="Furumichi M."/>
            <person name="Kanehisa M."/>
            <person name="Omata T."/>
            <person name="Sugiura M."/>
            <person name="Sugita M."/>
        </authorList>
    </citation>
    <scope>NUCLEOTIDE SEQUENCE [LARGE SCALE GENOMIC DNA]</scope>
    <source>
        <strain>ATCC 27144 / PCC 6301 / SAUG 1402/1</strain>
    </source>
</reference>
<protein>
    <recommendedName>
        <fullName>Elongation factor G</fullName>
        <shortName>EF-G</shortName>
    </recommendedName>
</protein>
<comment type="function">
    <text evidence="1">Catalyzes the GTP-dependent ribosomal translocation step during translation elongation. During this step, the ribosome changes from the pre-translocational (PRE) to the post-translocational (POST) state as the newly formed A-site-bound peptidyl-tRNA and P-site-bound deacylated tRNA move to the P and E sites, respectively. Catalyzes the coordinated movement of the two tRNA molecules, the mRNA and conformational changes in the ribosome (By similarity).</text>
</comment>
<comment type="subcellular location">
    <subcellularLocation>
        <location evidence="1">Cytoplasm</location>
    </subcellularLocation>
</comment>
<comment type="similarity">
    <text evidence="2">Belongs to the TRAFAC class translation factor GTPase superfamily. Classic translation factor GTPase family. EF-G/EF-2 subfamily.</text>
</comment>
<gene>
    <name type="primary">fusA</name>
    <name type="synonym">fus</name>
    <name type="ordered locus">syc0655_d</name>
</gene>
<sequence>MARSVPLEKVRNIGIAAHIDAGKTTTTERILFYSGVVHKIGEVHDGNAVTDWMEQERERGITITAAAISTSWKDYRVNIIDTPGHVDFTIEVERSMRVLDGVVAVFCSVGGVQPQSETVWRQADRYSVPRIVFVNKMDRTGADFFKVYGQIRDRVRANAVPIQIPIGAESDFQGIVDLVEMKAHIYTNDLGTDILVTDIPAELQETAAEWRSKMVEAVAETDEALLDKYFEDGDLSIEDIKAGLRKGVLIQGNDRLVPMLCGSAFKNKGVQLLLDAVVELLPSPQDIPPIQGTLPDGEVALRPSSDEAPFSALAFKIMADPYGRLTFVRVYSGILQKGSYVYNATKGKKERVSRLIILKADDRIEVDELRAGDLGAVLGLKDTFTGDTLCDDQNPIILESLFIPEPVISVAVEPKTKNDMEKLSKALQALSEEDPTFRVSVDSETNQTVIAGMGELHLEILVDRMLREYKVEANIGAPQVAYRETVRKAVKAEGKFVRQSGGKGQYGHVVIELEPAEPGTGFEFVSKIVGGTVPKEYVGPAEQGMKETCESGVLAGYPLIDIKATLVDGSYHDVDSSEMAFKIAGSMAIKEAVRKADPVLLEPVMKVEVEVPEDFLGSVMGNLISRRGQIEGQATTNGTATVSAKVPLAEMFGYATDLRSMTQGRGIFTMEFSQYEEVPRNVAETIIAKNKGNA</sequence>
<accession>P18667</accession>
<keyword id="KW-0963">Cytoplasm</keyword>
<keyword id="KW-0251">Elongation factor</keyword>
<keyword id="KW-0342">GTP-binding</keyword>
<keyword id="KW-0547">Nucleotide-binding</keyword>
<keyword id="KW-0648">Protein biosynthesis</keyword>
<name>EFG_SYNP6</name>
<dbReference type="EMBL" id="X17442">
    <property type="protein sequence ID" value="CAA35495.1"/>
    <property type="molecule type" value="Genomic_DNA"/>
</dbReference>
<dbReference type="EMBL" id="AP008231">
    <property type="protein sequence ID" value="BAD78845.1"/>
    <property type="molecule type" value="Genomic_DNA"/>
</dbReference>
<dbReference type="PIR" id="S04429">
    <property type="entry name" value="S04429"/>
</dbReference>
<dbReference type="RefSeq" id="WP_011242967.1">
    <property type="nucleotide sequence ID" value="NZ_CP085785.1"/>
</dbReference>
<dbReference type="SMR" id="P18667"/>
<dbReference type="GeneID" id="72429734"/>
<dbReference type="KEGG" id="syc:syc0655_d"/>
<dbReference type="eggNOG" id="COG0480">
    <property type="taxonomic scope" value="Bacteria"/>
</dbReference>
<dbReference type="Proteomes" id="UP000001175">
    <property type="component" value="Chromosome"/>
</dbReference>
<dbReference type="GO" id="GO:0005737">
    <property type="term" value="C:cytoplasm"/>
    <property type="evidence" value="ECO:0007669"/>
    <property type="project" value="UniProtKB-SubCell"/>
</dbReference>
<dbReference type="GO" id="GO:0005525">
    <property type="term" value="F:GTP binding"/>
    <property type="evidence" value="ECO:0007669"/>
    <property type="project" value="UniProtKB-UniRule"/>
</dbReference>
<dbReference type="GO" id="GO:0003924">
    <property type="term" value="F:GTPase activity"/>
    <property type="evidence" value="ECO:0007669"/>
    <property type="project" value="InterPro"/>
</dbReference>
<dbReference type="GO" id="GO:0003746">
    <property type="term" value="F:translation elongation factor activity"/>
    <property type="evidence" value="ECO:0007669"/>
    <property type="project" value="UniProtKB-UniRule"/>
</dbReference>
<dbReference type="GO" id="GO:0032790">
    <property type="term" value="P:ribosome disassembly"/>
    <property type="evidence" value="ECO:0007669"/>
    <property type="project" value="TreeGrafter"/>
</dbReference>
<dbReference type="CDD" id="cd01886">
    <property type="entry name" value="EF-G"/>
    <property type="match status" value="1"/>
</dbReference>
<dbReference type="CDD" id="cd16262">
    <property type="entry name" value="EFG_III"/>
    <property type="match status" value="1"/>
</dbReference>
<dbReference type="CDD" id="cd01434">
    <property type="entry name" value="EFG_mtEFG1_IV"/>
    <property type="match status" value="1"/>
</dbReference>
<dbReference type="CDD" id="cd03713">
    <property type="entry name" value="EFG_mtEFG_C"/>
    <property type="match status" value="1"/>
</dbReference>
<dbReference type="CDD" id="cd04088">
    <property type="entry name" value="EFG_mtEFG_II"/>
    <property type="match status" value="1"/>
</dbReference>
<dbReference type="FunFam" id="2.40.30.10:FF:000006">
    <property type="entry name" value="Elongation factor G"/>
    <property type="match status" value="1"/>
</dbReference>
<dbReference type="FunFam" id="3.30.230.10:FF:000003">
    <property type="entry name" value="Elongation factor G"/>
    <property type="match status" value="1"/>
</dbReference>
<dbReference type="FunFam" id="3.30.70.240:FF:000001">
    <property type="entry name" value="Elongation factor G"/>
    <property type="match status" value="1"/>
</dbReference>
<dbReference type="FunFam" id="3.30.70.870:FF:000001">
    <property type="entry name" value="Elongation factor G"/>
    <property type="match status" value="1"/>
</dbReference>
<dbReference type="FunFam" id="3.40.50.300:FF:000029">
    <property type="entry name" value="Elongation factor G"/>
    <property type="match status" value="1"/>
</dbReference>
<dbReference type="Gene3D" id="3.30.230.10">
    <property type="match status" value="1"/>
</dbReference>
<dbReference type="Gene3D" id="3.30.70.240">
    <property type="match status" value="1"/>
</dbReference>
<dbReference type="Gene3D" id="3.30.70.870">
    <property type="entry name" value="Elongation Factor G (Translational Gtpase), domain 3"/>
    <property type="match status" value="1"/>
</dbReference>
<dbReference type="Gene3D" id="3.40.50.300">
    <property type="entry name" value="P-loop containing nucleotide triphosphate hydrolases"/>
    <property type="match status" value="1"/>
</dbReference>
<dbReference type="Gene3D" id="2.40.30.10">
    <property type="entry name" value="Translation factors"/>
    <property type="match status" value="1"/>
</dbReference>
<dbReference type="HAMAP" id="MF_00054_B">
    <property type="entry name" value="EF_G_EF_2_B"/>
    <property type="match status" value="1"/>
</dbReference>
<dbReference type="InterPro" id="IPR041095">
    <property type="entry name" value="EFG_II"/>
</dbReference>
<dbReference type="InterPro" id="IPR009022">
    <property type="entry name" value="EFG_III"/>
</dbReference>
<dbReference type="InterPro" id="IPR035647">
    <property type="entry name" value="EFG_III/V"/>
</dbReference>
<dbReference type="InterPro" id="IPR047872">
    <property type="entry name" value="EFG_IV"/>
</dbReference>
<dbReference type="InterPro" id="IPR035649">
    <property type="entry name" value="EFG_V"/>
</dbReference>
<dbReference type="InterPro" id="IPR000640">
    <property type="entry name" value="EFG_V-like"/>
</dbReference>
<dbReference type="InterPro" id="IPR004161">
    <property type="entry name" value="EFTu-like_2"/>
</dbReference>
<dbReference type="InterPro" id="IPR031157">
    <property type="entry name" value="G_TR_CS"/>
</dbReference>
<dbReference type="InterPro" id="IPR027417">
    <property type="entry name" value="P-loop_NTPase"/>
</dbReference>
<dbReference type="InterPro" id="IPR020568">
    <property type="entry name" value="Ribosomal_Su5_D2-typ_SF"/>
</dbReference>
<dbReference type="InterPro" id="IPR014721">
    <property type="entry name" value="Ribsml_uS5_D2-typ_fold_subgr"/>
</dbReference>
<dbReference type="InterPro" id="IPR005225">
    <property type="entry name" value="Small_GTP-bd"/>
</dbReference>
<dbReference type="InterPro" id="IPR000795">
    <property type="entry name" value="T_Tr_GTP-bd_dom"/>
</dbReference>
<dbReference type="InterPro" id="IPR009000">
    <property type="entry name" value="Transl_B-barrel_sf"/>
</dbReference>
<dbReference type="InterPro" id="IPR004540">
    <property type="entry name" value="Transl_elong_EFG/EF2"/>
</dbReference>
<dbReference type="InterPro" id="IPR005517">
    <property type="entry name" value="Transl_elong_EFG/EF2_IV"/>
</dbReference>
<dbReference type="NCBIfam" id="TIGR00484">
    <property type="entry name" value="EF-G"/>
    <property type="match status" value="1"/>
</dbReference>
<dbReference type="NCBIfam" id="NF009379">
    <property type="entry name" value="PRK12740.1-3"/>
    <property type="match status" value="1"/>
</dbReference>
<dbReference type="NCBIfam" id="NF009381">
    <property type="entry name" value="PRK12740.1-5"/>
    <property type="match status" value="1"/>
</dbReference>
<dbReference type="NCBIfam" id="TIGR00231">
    <property type="entry name" value="small_GTP"/>
    <property type="match status" value="1"/>
</dbReference>
<dbReference type="PANTHER" id="PTHR43261:SF1">
    <property type="entry name" value="RIBOSOME-RELEASING FACTOR 2, MITOCHONDRIAL"/>
    <property type="match status" value="1"/>
</dbReference>
<dbReference type="PANTHER" id="PTHR43261">
    <property type="entry name" value="TRANSLATION ELONGATION FACTOR G-RELATED"/>
    <property type="match status" value="1"/>
</dbReference>
<dbReference type="Pfam" id="PF00679">
    <property type="entry name" value="EFG_C"/>
    <property type="match status" value="1"/>
</dbReference>
<dbReference type="Pfam" id="PF14492">
    <property type="entry name" value="EFG_III"/>
    <property type="match status" value="1"/>
</dbReference>
<dbReference type="Pfam" id="PF03764">
    <property type="entry name" value="EFG_IV"/>
    <property type="match status" value="1"/>
</dbReference>
<dbReference type="Pfam" id="PF00009">
    <property type="entry name" value="GTP_EFTU"/>
    <property type="match status" value="1"/>
</dbReference>
<dbReference type="Pfam" id="PF03144">
    <property type="entry name" value="GTP_EFTU_D2"/>
    <property type="match status" value="1"/>
</dbReference>
<dbReference type="PRINTS" id="PR00315">
    <property type="entry name" value="ELONGATNFCT"/>
</dbReference>
<dbReference type="SMART" id="SM00838">
    <property type="entry name" value="EFG_C"/>
    <property type="match status" value="1"/>
</dbReference>
<dbReference type="SMART" id="SM00889">
    <property type="entry name" value="EFG_IV"/>
    <property type="match status" value="1"/>
</dbReference>
<dbReference type="SUPFAM" id="SSF54980">
    <property type="entry name" value="EF-G C-terminal domain-like"/>
    <property type="match status" value="2"/>
</dbReference>
<dbReference type="SUPFAM" id="SSF52540">
    <property type="entry name" value="P-loop containing nucleoside triphosphate hydrolases"/>
    <property type="match status" value="1"/>
</dbReference>
<dbReference type="SUPFAM" id="SSF54211">
    <property type="entry name" value="Ribosomal protein S5 domain 2-like"/>
    <property type="match status" value="1"/>
</dbReference>
<dbReference type="SUPFAM" id="SSF50447">
    <property type="entry name" value="Translation proteins"/>
    <property type="match status" value="1"/>
</dbReference>
<dbReference type="PROSITE" id="PS00301">
    <property type="entry name" value="G_TR_1"/>
    <property type="match status" value="1"/>
</dbReference>
<dbReference type="PROSITE" id="PS51722">
    <property type="entry name" value="G_TR_2"/>
    <property type="match status" value="1"/>
</dbReference>
<evidence type="ECO:0000250" key="1"/>
<evidence type="ECO:0000305" key="2"/>
<organism>
    <name type="scientific">Synechococcus sp. (strain ATCC 27144 / PCC 6301 / SAUG 1402/1)</name>
    <name type="common">Anacystis nidulans</name>
    <dbReference type="NCBI Taxonomy" id="269084"/>
    <lineage>
        <taxon>Bacteria</taxon>
        <taxon>Bacillati</taxon>
        <taxon>Cyanobacteriota</taxon>
        <taxon>Cyanophyceae</taxon>
        <taxon>Synechococcales</taxon>
        <taxon>Synechococcaceae</taxon>
        <taxon>Synechococcus</taxon>
    </lineage>
</organism>